<dbReference type="EC" id="4.6.1.17" evidence="1"/>
<dbReference type="EMBL" id="AE004091">
    <property type="protein sequence ID" value="AAG07305.1"/>
    <property type="molecule type" value="Genomic_DNA"/>
</dbReference>
<dbReference type="PIR" id="D83156">
    <property type="entry name" value="D83156"/>
</dbReference>
<dbReference type="RefSeq" id="NP_252607.1">
    <property type="nucleotide sequence ID" value="NC_002516.2"/>
</dbReference>
<dbReference type="RefSeq" id="WP_003093030.1">
    <property type="nucleotide sequence ID" value="NZ_QZGE01000001.1"/>
</dbReference>
<dbReference type="SMR" id="Q9HX95"/>
<dbReference type="FunCoup" id="Q9HX95">
    <property type="interactions" value="457"/>
</dbReference>
<dbReference type="STRING" id="208964.PA3918"/>
<dbReference type="PaxDb" id="208964-PA3918"/>
<dbReference type="DNASU" id="879014"/>
<dbReference type="GeneID" id="879014"/>
<dbReference type="KEGG" id="pae:PA3918"/>
<dbReference type="PATRIC" id="fig|208964.12.peg.4104"/>
<dbReference type="PseudoCAP" id="PA3918"/>
<dbReference type="HOGENOM" id="CLU_074693_1_1_6"/>
<dbReference type="InParanoid" id="Q9HX95"/>
<dbReference type="OrthoDB" id="9794429at2"/>
<dbReference type="PhylomeDB" id="Q9HX95"/>
<dbReference type="BioCyc" id="PAER208964:G1FZ6-3991-MONOMER"/>
<dbReference type="UniPathway" id="UPA00344"/>
<dbReference type="Proteomes" id="UP000002438">
    <property type="component" value="Chromosome"/>
</dbReference>
<dbReference type="GO" id="GO:0061799">
    <property type="term" value="F:cyclic pyranopterin monophosphate synthase activity"/>
    <property type="evidence" value="ECO:0007669"/>
    <property type="project" value="UniProtKB-UniRule"/>
</dbReference>
<dbReference type="GO" id="GO:0006777">
    <property type="term" value="P:Mo-molybdopterin cofactor biosynthetic process"/>
    <property type="evidence" value="ECO:0007669"/>
    <property type="project" value="UniProtKB-UniRule"/>
</dbReference>
<dbReference type="CDD" id="cd01420">
    <property type="entry name" value="MoaC_PE"/>
    <property type="match status" value="1"/>
</dbReference>
<dbReference type="FunFam" id="3.30.70.640:FF:000001">
    <property type="entry name" value="Cyclic pyranopterin monophosphate synthase"/>
    <property type="match status" value="1"/>
</dbReference>
<dbReference type="Gene3D" id="3.30.70.640">
    <property type="entry name" value="Molybdopterin cofactor biosynthesis C (MoaC) domain"/>
    <property type="match status" value="1"/>
</dbReference>
<dbReference type="HAMAP" id="MF_01224_B">
    <property type="entry name" value="MoaC_B"/>
    <property type="match status" value="1"/>
</dbReference>
<dbReference type="InterPro" id="IPR023045">
    <property type="entry name" value="MoaC"/>
</dbReference>
<dbReference type="InterPro" id="IPR047594">
    <property type="entry name" value="MoaC_bact/euk"/>
</dbReference>
<dbReference type="InterPro" id="IPR036522">
    <property type="entry name" value="MoaC_sf"/>
</dbReference>
<dbReference type="InterPro" id="IPR050105">
    <property type="entry name" value="MoCo_biosynth_MoaA/MoaC"/>
</dbReference>
<dbReference type="InterPro" id="IPR002820">
    <property type="entry name" value="Mopterin_CF_biosynth-C_dom"/>
</dbReference>
<dbReference type="NCBIfam" id="TIGR00581">
    <property type="entry name" value="moaC"/>
    <property type="match status" value="1"/>
</dbReference>
<dbReference type="NCBIfam" id="NF006870">
    <property type="entry name" value="PRK09364.1"/>
    <property type="match status" value="1"/>
</dbReference>
<dbReference type="PANTHER" id="PTHR22960:SF29">
    <property type="entry name" value="CYCLIC PYRANOPTERIN MONOPHOSPHATE SYNTHASE"/>
    <property type="match status" value="1"/>
</dbReference>
<dbReference type="PANTHER" id="PTHR22960">
    <property type="entry name" value="MOLYBDOPTERIN COFACTOR SYNTHESIS PROTEIN A"/>
    <property type="match status" value="1"/>
</dbReference>
<dbReference type="Pfam" id="PF01967">
    <property type="entry name" value="MoaC"/>
    <property type="match status" value="1"/>
</dbReference>
<dbReference type="SUPFAM" id="SSF55040">
    <property type="entry name" value="Molybdenum cofactor biosynthesis protein C, MoaC"/>
    <property type="match status" value="1"/>
</dbReference>
<accession>Q9HX95</accession>
<proteinExistence type="inferred from homology"/>
<name>MOAC_PSEAE</name>
<comment type="function">
    <text evidence="1">Catalyzes the conversion of (8S)-3',8-cyclo-7,8-dihydroguanosine 5'-triphosphate to cyclic pyranopterin monophosphate (cPMP).</text>
</comment>
<comment type="catalytic activity">
    <reaction evidence="1">
        <text>(8S)-3',8-cyclo-7,8-dihydroguanosine 5'-triphosphate = cyclic pyranopterin phosphate + diphosphate</text>
        <dbReference type="Rhea" id="RHEA:49580"/>
        <dbReference type="ChEBI" id="CHEBI:33019"/>
        <dbReference type="ChEBI" id="CHEBI:59648"/>
        <dbReference type="ChEBI" id="CHEBI:131766"/>
        <dbReference type="EC" id="4.6.1.17"/>
    </reaction>
</comment>
<comment type="pathway">
    <text evidence="1">Cofactor biosynthesis; molybdopterin biosynthesis.</text>
</comment>
<comment type="subunit">
    <text evidence="1">Homohexamer; trimer of dimers.</text>
</comment>
<comment type="similarity">
    <text evidence="1">Belongs to the MoaC family.</text>
</comment>
<feature type="chain" id="PRO_0000097817" description="Cyclic pyranopterin monophosphate synthase">
    <location>
        <begin position="1"/>
        <end position="160"/>
    </location>
</feature>
<feature type="active site" evidence="1">
    <location>
        <position position="125"/>
    </location>
</feature>
<feature type="binding site" evidence="1">
    <location>
        <begin position="73"/>
        <end position="75"/>
    </location>
    <ligand>
        <name>substrate</name>
    </ligand>
</feature>
<feature type="binding site" evidence="1">
    <location>
        <begin position="110"/>
        <end position="111"/>
    </location>
    <ligand>
        <name>substrate</name>
    </ligand>
</feature>
<gene>
    <name evidence="1" type="primary">moaC</name>
    <name type="ordered locus">PA3918</name>
</gene>
<sequence>MLTHLDSQGRANMVDVTEKAVTSREATAEAVVRMRPETLQLIQDGGHPKGDVFAVARIAGIQAAKRTHELIPLCHPLLLTSVKLELQAEAPDAVRIRARCRLAGQTGVEMEALTAASVAALTIYDMCKAVDRGMVIEQVQLLEKLGGKSGHYRKEEEGQA</sequence>
<protein>
    <recommendedName>
        <fullName evidence="1">Cyclic pyranopterin monophosphate synthase</fullName>
        <ecNumber evidence="1">4.6.1.17</ecNumber>
    </recommendedName>
    <alternativeName>
        <fullName evidence="1">Molybdenum cofactor biosynthesis protein C</fullName>
    </alternativeName>
</protein>
<evidence type="ECO:0000255" key="1">
    <source>
        <dbReference type="HAMAP-Rule" id="MF_01224"/>
    </source>
</evidence>
<organism>
    <name type="scientific">Pseudomonas aeruginosa (strain ATCC 15692 / DSM 22644 / CIP 104116 / JCM 14847 / LMG 12228 / 1C / PRS 101 / PAO1)</name>
    <dbReference type="NCBI Taxonomy" id="208964"/>
    <lineage>
        <taxon>Bacteria</taxon>
        <taxon>Pseudomonadati</taxon>
        <taxon>Pseudomonadota</taxon>
        <taxon>Gammaproteobacteria</taxon>
        <taxon>Pseudomonadales</taxon>
        <taxon>Pseudomonadaceae</taxon>
        <taxon>Pseudomonas</taxon>
    </lineage>
</organism>
<keyword id="KW-0456">Lyase</keyword>
<keyword id="KW-0501">Molybdenum cofactor biosynthesis</keyword>
<keyword id="KW-1185">Reference proteome</keyword>
<reference key="1">
    <citation type="journal article" date="2000" name="Nature">
        <title>Complete genome sequence of Pseudomonas aeruginosa PAO1, an opportunistic pathogen.</title>
        <authorList>
            <person name="Stover C.K."/>
            <person name="Pham X.-Q.T."/>
            <person name="Erwin A.L."/>
            <person name="Mizoguchi S.D."/>
            <person name="Warrener P."/>
            <person name="Hickey M.J."/>
            <person name="Brinkman F.S.L."/>
            <person name="Hufnagle W.O."/>
            <person name="Kowalik D.J."/>
            <person name="Lagrou M."/>
            <person name="Garber R.L."/>
            <person name="Goltry L."/>
            <person name="Tolentino E."/>
            <person name="Westbrock-Wadman S."/>
            <person name="Yuan Y."/>
            <person name="Brody L.L."/>
            <person name="Coulter S.N."/>
            <person name="Folger K.R."/>
            <person name="Kas A."/>
            <person name="Larbig K."/>
            <person name="Lim R.M."/>
            <person name="Smith K.A."/>
            <person name="Spencer D.H."/>
            <person name="Wong G.K.-S."/>
            <person name="Wu Z."/>
            <person name="Paulsen I.T."/>
            <person name="Reizer J."/>
            <person name="Saier M.H. Jr."/>
            <person name="Hancock R.E.W."/>
            <person name="Lory S."/>
            <person name="Olson M.V."/>
        </authorList>
    </citation>
    <scope>NUCLEOTIDE SEQUENCE [LARGE SCALE GENOMIC DNA]</scope>
    <source>
        <strain>ATCC 15692 / DSM 22644 / CIP 104116 / JCM 14847 / LMG 12228 / 1C / PRS 101 / PAO1</strain>
    </source>
</reference>